<organism>
    <name type="scientific">Staphylococcus aureus (strain N315)</name>
    <dbReference type="NCBI Taxonomy" id="158879"/>
    <lineage>
        <taxon>Bacteria</taxon>
        <taxon>Bacillati</taxon>
        <taxon>Bacillota</taxon>
        <taxon>Bacilli</taxon>
        <taxon>Bacillales</taxon>
        <taxon>Staphylococcaceae</taxon>
        <taxon>Staphylococcus</taxon>
    </lineage>
</organism>
<keyword id="KW-0963">Cytoplasm</keyword>
<keyword id="KW-0238">DNA-binding</keyword>
<keyword id="KW-0678">Repressor</keyword>
<keyword id="KW-0804">Transcription</keyword>
<keyword id="KW-0805">Transcription regulation</keyword>
<evidence type="ECO:0000255" key="1">
    <source>
        <dbReference type="HAMAP-Rule" id="MF_00621"/>
    </source>
</evidence>
<accession>P63844</accession>
<accession>Q99UL6</accession>
<feature type="chain" id="PRO_0000213233" description="Global transcriptional regulator CodY">
    <location>
        <begin position="1"/>
        <end position="257"/>
    </location>
</feature>
<feature type="DNA-binding region" description="H-T-H motif" evidence="1">
    <location>
        <begin position="203"/>
        <end position="222"/>
    </location>
</feature>
<feature type="region of interest" description="GAF domain" evidence="1">
    <location>
        <begin position="1"/>
        <end position="155"/>
    </location>
</feature>
<proteinExistence type="evidence at protein level"/>
<gene>
    <name evidence="1" type="primary">codY</name>
    <name type="ordered locus">SA1098</name>
</gene>
<reference key="1">
    <citation type="journal article" date="2001" name="Lancet">
        <title>Whole genome sequencing of meticillin-resistant Staphylococcus aureus.</title>
        <authorList>
            <person name="Kuroda M."/>
            <person name="Ohta T."/>
            <person name="Uchiyama I."/>
            <person name="Baba T."/>
            <person name="Yuzawa H."/>
            <person name="Kobayashi I."/>
            <person name="Cui L."/>
            <person name="Oguchi A."/>
            <person name="Aoki K."/>
            <person name="Nagai Y."/>
            <person name="Lian J.-Q."/>
            <person name="Ito T."/>
            <person name="Kanamori M."/>
            <person name="Matsumaru H."/>
            <person name="Maruyama A."/>
            <person name="Murakami H."/>
            <person name="Hosoyama A."/>
            <person name="Mizutani-Ui Y."/>
            <person name="Takahashi N.K."/>
            <person name="Sawano T."/>
            <person name="Inoue R."/>
            <person name="Kaito C."/>
            <person name="Sekimizu K."/>
            <person name="Hirakawa H."/>
            <person name="Kuhara S."/>
            <person name="Goto S."/>
            <person name="Yabuzaki J."/>
            <person name="Kanehisa M."/>
            <person name="Yamashita A."/>
            <person name="Oshima K."/>
            <person name="Furuya K."/>
            <person name="Yoshino C."/>
            <person name="Shiba T."/>
            <person name="Hattori M."/>
            <person name="Ogasawara N."/>
            <person name="Hayashi H."/>
            <person name="Hiramatsu K."/>
        </authorList>
    </citation>
    <scope>NUCLEOTIDE SEQUENCE [LARGE SCALE GENOMIC DNA]</scope>
    <source>
        <strain>N315</strain>
    </source>
</reference>
<reference key="2">
    <citation type="submission" date="2005-11" db="UniProtKB">
        <title>Shotgun proteomic analysis of total protein extract of S. aureus S30 versus N315.</title>
        <authorList>
            <person name="Stenz L."/>
        </authorList>
    </citation>
    <scope>IDENTIFICATION BY MASS SPECTROMETRY</scope>
</reference>
<reference key="3">
    <citation type="submission" date="2007-10" db="UniProtKB">
        <title>Shotgun proteomic analysis of total and membrane protein extracts of S. aureus strain N315.</title>
        <authorList>
            <person name="Vaezzadeh A.R."/>
            <person name="Deshusses J."/>
            <person name="Lescuyer P."/>
            <person name="Hochstrasser D.F."/>
        </authorList>
    </citation>
    <scope>IDENTIFICATION BY MASS SPECTROMETRY [LARGE SCALE ANALYSIS]</scope>
    <source>
        <strain>N315</strain>
    </source>
</reference>
<protein>
    <recommendedName>
        <fullName evidence="1">Global transcriptional regulator CodY</fullName>
    </recommendedName>
</protein>
<name>CODY_STAAN</name>
<sequence length="257" mass="28755">MSLLSKTRELNTLLQKHKGIAVDFKDVAQTISSVTVTNVFIVSRRGKILGSSLNELLKSQRIIQMLEERHIPSEYTERLMEVKQTESNIDIDNVLTVFPPENRELFIDSRTTIFPILGGGERLGTLVLGRVHDDFNENDLVLGEYAATVIGMEILREKHSEVEKEARDKAAITMAINSLSYSEKEAIEHIFEELGGTEGLLIASKVADRVGITRSVIVNALRKLESAGVIESRSLGMKGTFIKVKKEKFLDELEKSK</sequence>
<comment type="function">
    <text evidence="1">DNA-binding global transcriptional regulator which is involved in the adaptive response to starvation and acts by directly or indirectly controlling the expression of numerous genes in response to nutrient availability. During rapid exponential growth, CodY is highly active and represses genes whose products allow adaptation to nutrient depletion.</text>
</comment>
<comment type="subcellular location">
    <subcellularLocation>
        <location evidence="1">Cytoplasm</location>
    </subcellularLocation>
</comment>
<comment type="similarity">
    <text evidence="1">Belongs to the CodY family.</text>
</comment>
<dbReference type="EMBL" id="BA000018">
    <property type="protein sequence ID" value="BAB42350.1"/>
    <property type="molecule type" value="Genomic_DNA"/>
</dbReference>
<dbReference type="PIR" id="B89899">
    <property type="entry name" value="B89899"/>
</dbReference>
<dbReference type="RefSeq" id="WP_000055337.1">
    <property type="nucleotide sequence ID" value="NC_002745.2"/>
</dbReference>
<dbReference type="SMR" id="P63844"/>
<dbReference type="EnsemblBacteria" id="BAB42350">
    <property type="protein sequence ID" value="BAB42350"/>
    <property type="gene ID" value="BAB42350"/>
</dbReference>
<dbReference type="KEGG" id="sau:SA1098"/>
<dbReference type="HOGENOM" id="CLU_089581_0_0_9"/>
<dbReference type="GO" id="GO:0005737">
    <property type="term" value="C:cytoplasm"/>
    <property type="evidence" value="ECO:0007669"/>
    <property type="project" value="UniProtKB-SubCell"/>
</dbReference>
<dbReference type="GO" id="GO:0003677">
    <property type="term" value="F:DNA binding"/>
    <property type="evidence" value="ECO:0007669"/>
    <property type="project" value="UniProtKB-UniRule"/>
</dbReference>
<dbReference type="GO" id="GO:0003700">
    <property type="term" value="F:DNA-binding transcription factor activity"/>
    <property type="evidence" value="ECO:0007669"/>
    <property type="project" value="InterPro"/>
</dbReference>
<dbReference type="GO" id="GO:0005525">
    <property type="term" value="F:GTP binding"/>
    <property type="evidence" value="ECO:0007669"/>
    <property type="project" value="InterPro"/>
</dbReference>
<dbReference type="GO" id="GO:0045892">
    <property type="term" value="P:negative regulation of DNA-templated transcription"/>
    <property type="evidence" value="ECO:0007669"/>
    <property type="project" value="UniProtKB-UniRule"/>
</dbReference>
<dbReference type="FunFam" id="1.10.10.10:FF:000034">
    <property type="entry name" value="GTP-sensing transcriptional pleiotropic repressor CodY"/>
    <property type="match status" value="1"/>
</dbReference>
<dbReference type="FunFam" id="3.30.450.40:FF:000003">
    <property type="entry name" value="GTP-sensing transcriptional pleiotropic repressor CodY"/>
    <property type="match status" value="1"/>
</dbReference>
<dbReference type="Gene3D" id="3.30.450.40">
    <property type="match status" value="1"/>
</dbReference>
<dbReference type="Gene3D" id="1.10.10.10">
    <property type="entry name" value="Winged helix-like DNA-binding domain superfamily/Winged helix DNA-binding domain"/>
    <property type="match status" value="1"/>
</dbReference>
<dbReference type="HAMAP" id="MF_00621">
    <property type="entry name" value="HTH_type_CodY"/>
    <property type="match status" value="1"/>
</dbReference>
<dbReference type="InterPro" id="IPR014154">
    <property type="entry name" value="CodY"/>
</dbReference>
<dbReference type="InterPro" id="IPR029016">
    <property type="entry name" value="GAF-like_dom_sf"/>
</dbReference>
<dbReference type="InterPro" id="IPR013198">
    <property type="entry name" value="GTP_trans_reg_CodY_C"/>
</dbReference>
<dbReference type="InterPro" id="IPR010312">
    <property type="entry name" value="Transc_reg_CodY_N"/>
</dbReference>
<dbReference type="InterPro" id="IPR036388">
    <property type="entry name" value="WH-like_DNA-bd_sf"/>
</dbReference>
<dbReference type="InterPro" id="IPR036390">
    <property type="entry name" value="WH_DNA-bd_sf"/>
</dbReference>
<dbReference type="NCBIfam" id="TIGR02787">
    <property type="entry name" value="codY_Gpos"/>
    <property type="match status" value="1"/>
</dbReference>
<dbReference type="NCBIfam" id="NF003170">
    <property type="entry name" value="PRK04158.1"/>
    <property type="match status" value="1"/>
</dbReference>
<dbReference type="PANTHER" id="PTHR40062:SF1">
    <property type="entry name" value="GLOBAL TRANSCRIPTIONAL REGULATOR CODY"/>
    <property type="match status" value="1"/>
</dbReference>
<dbReference type="PANTHER" id="PTHR40062">
    <property type="entry name" value="GTP-SENSING TRANSCRIPTIONAL PLEIOTROPIC REPRESSOR CODY"/>
    <property type="match status" value="1"/>
</dbReference>
<dbReference type="Pfam" id="PF06018">
    <property type="entry name" value="CodY"/>
    <property type="match status" value="1"/>
</dbReference>
<dbReference type="Pfam" id="PF08222">
    <property type="entry name" value="HTH_CodY"/>
    <property type="match status" value="1"/>
</dbReference>
<dbReference type="PIRSF" id="PIRSF011572">
    <property type="entry name" value="GTP_sensing_CodY"/>
    <property type="match status" value="1"/>
</dbReference>
<dbReference type="SUPFAM" id="SSF46785">
    <property type="entry name" value="Winged helix' DNA-binding domain"/>
    <property type="match status" value="1"/>
</dbReference>